<keyword id="KW-0007">Acetylation</keyword>
<keyword id="KW-0131">Cell cycle</keyword>
<keyword id="KW-0143">Chaperone</keyword>
<keyword id="KW-0156">Chromatin regulator</keyword>
<keyword id="KW-0158">Chromosome</keyword>
<keyword id="KW-0227">DNA damage</keyword>
<keyword id="KW-0234">DNA repair</keyword>
<keyword id="KW-0235">DNA replication</keyword>
<keyword id="KW-1017">Isopeptide bond</keyword>
<keyword id="KW-0539">Nucleus</keyword>
<keyword id="KW-0597">Phosphoprotein</keyword>
<keyword id="KW-1185">Reference proteome</keyword>
<keyword id="KW-0677">Repeat</keyword>
<keyword id="KW-0678">Repressor</keyword>
<keyword id="KW-0779">Telomere</keyword>
<keyword id="KW-0804">Transcription</keyword>
<keyword id="KW-0805">Transcription regulation</keyword>
<keyword id="KW-0832">Ubl conjugation</keyword>
<keyword id="KW-0853">WD repeat</keyword>
<protein>
    <recommendedName>
        <fullName>Histone-binding protein RBBP4</fullName>
    </recommendedName>
    <alternativeName>
        <fullName evidence="3">Chromatin assembly factor 1 subunit C</fullName>
        <shortName evidence="3">CAF-1 subunit C</shortName>
    </alternativeName>
    <alternativeName>
        <fullName>Nucleosome-remodeling factor subunit RBAP48</fullName>
    </alternativeName>
    <alternativeName>
        <fullName evidence="1">Retinoblastoma-binding protein 4</fullName>
        <shortName>RBBP-4</shortName>
    </alternativeName>
</protein>
<reference key="1">
    <citation type="submission" date="2004-11" db="EMBL/GenBank/DDBJ databases">
        <authorList>
            <consortium name="The German cDNA consortium"/>
        </authorList>
    </citation>
    <scope>NUCLEOTIDE SEQUENCE [LARGE SCALE MRNA]</scope>
    <source>
        <tissue>Kidney</tissue>
    </source>
</reference>
<dbReference type="EMBL" id="CR857269">
    <property type="protein sequence ID" value="CAH89565.1"/>
    <property type="status" value="ALT_FRAME"/>
    <property type="molecule type" value="mRNA"/>
</dbReference>
<dbReference type="RefSeq" id="NP_001124686.1">
    <property type="nucleotide sequence ID" value="NM_001131214.1"/>
</dbReference>
<dbReference type="SMR" id="Q5RF92"/>
<dbReference type="STRING" id="9601.ENSPPYP00000001831"/>
<dbReference type="GeneID" id="100461561"/>
<dbReference type="KEGG" id="pon:100461561"/>
<dbReference type="CTD" id="5928"/>
<dbReference type="eggNOG" id="KOG0264">
    <property type="taxonomic scope" value="Eukaryota"/>
</dbReference>
<dbReference type="InParanoid" id="Q5RF92"/>
<dbReference type="OrthoDB" id="427795at2759"/>
<dbReference type="Proteomes" id="UP000001595">
    <property type="component" value="Unplaced"/>
</dbReference>
<dbReference type="GO" id="GO:0033186">
    <property type="term" value="C:CAF-1 complex"/>
    <property type="evidence" value="ECO:0000250"/>
    <property type="project" value="UniProtKB"/>
</dbReference>
<dbReference type="GO" id="GO:0000781">
    <property type="term" value="C:chromosome, telomeric region"/>
    <property type="evidence" value="ECO:0007669"/>
    <property type="project" value="UniProtKB-SubCell"/>
</dbReference>
<dbReference type="GO" id="GO:0035098">
    <property type="term" value="C:ESC/E(Z) complex"/>
    <property type="evidence" value="ECO:0000250"/>
    <property type="project" value="UniProtKB"/>
</dbReference>
<dbReference type="GO" id="GO:0005634">
    <property type="term" value="C:nucleus"/>
    <property type="evidence" value="ECO:0000250"/>
    <property type="project" value="UniProtKB"/>
</dbReference>
<dbReference type="GO" id="GO:0016581">
    <property type="term" value="C:NuRD complex"/>
    <property type="evidence" value="ECO:0000250"/>
    <property type="project" value="UniProtKB"/>
</dbReference>
<dbReference type="GO" id="GO:0006281">
    <property type="term" value="P:DNA repair"/>
    <property type="evidence" value="ECO:0007669"/>
    <property type="project" value="UniProtKB-KW"/>
</dbReference>
<dbReference type="GO" id="GO:0006260">
    <property type="term" value="P:DNA replication"/>
    <property type="evidence" value="ECO:0007669"/>
    <property type="project" value="UniProtKB-KW"/>
</dbReference>
<dbReference type="GO" id="GO:0006335">
    <property type="term" value="P:DNA replication-dependent chromatin assembly"/>
    <property type="evidence" value="ECO:0000250"/>
    <property type="project" value="UniProtKB"/>
</dbReference>
<dbReference type="FunFam" id="2.130.10.10:FF:000021">
    <property type="entry name" value="histone-binding protein RBBP4 isoform X1"/>
    <property type="match status" value="1"/>
</dbReference>
<dbReference type="Gene3D" id="2.130.10.10">
    <property type="entry name" value="YVTN repeat-like/Quinoprotein amine dehydrogenase"/>
    <property type="match status" value="1"/>
</dbReference>
<dbReference type="InterPro" id="IPR020472">
    <property type="entry name" value="G-protein_beta_WD-40_rep"/>
</dbReference>
<dbReference type="InterPro" id="IPR022052">
    <property type="entry name" value="Histone-bd_RBBP4-like_N"/>
</dbReference>
<dbReference type="InterPro" id="IPR015943">
    <property type="entry name" value="WD40/YVTN_repeat-like_dom_sf"/>
</dbReference>
<dbReference type="InterPro" id="IPR019775">
    <property type="entry name" value="WD40_repeat_CS"/>
</dbReference>
<dbReference type="InterPro" id="IPR036322">
    <property type="entry name" value="WD40_repeat_dom_sf"/>
</dbReference>
<dbReference type="InterPro" id="IPR001680">
    <property type="entry name" value="WD40_rpt"/>
</dbReference>
<dbReference type="InterPro" id="IPR050459">
    <property type="entry name" value="WD_repeat_RBAP46/RBAP48/MSI1"/>
</dbReference>
<dbReference type="PANTHER" id="PTHR22850">
    <property type="entry name" value="WD40 REPEAT FAMILY"/>
    <property type="match status" value="1"/>
</dbReference>
<dbReference type="Pfam" id="PF12265">
    <property type="entry name" value="CAF1C_H4-bd"/>
    <property type="match status" value="1"/>
</dbReference>
<dbReference type="Pfam" id="PF00400">
    <property type="entry name" value="WD40"/>
    <property type="match status" value="5"/>
</dbReference>
<dbReference type="PRINTS" id="PR00320">
    <property type="entry name" value="GPROTEINBRPT"/>
</dbReference>
<dbReference type="SMART" id="SM00320">
    <property type="entry name" value="WD40"/>
    <property type="match status" value="6"/>
</dbReference>
<dbReference type="SUPFAM" id="SSF50978">
    <property type="entry name" value="WD40 repeat-like"/>
    <property type="match status" value="1"/>
</dbReference>
<dbReference type="PROSITE" id="PS00678">
    <property type="entry name" value="WD_REPEATS_1"/>
    <property type="match status" value="3"/>
</dbReference>
<dbReference type="PROSITE" id="PS50082">
    <property type="entry name" value="WD_REPEATS_2"/>
    <property type="match status" value="5"/>
</dbReference>
<dbReference type="PROSITE" id="PS50294">
    <property type="entry name" value="WD_REPEATS_REGION"/>
    <property type="match status" value="1"/>
</dbReference>
<accession>Q5RF92</accession>
<sequence>MADKEAAFDDAVEERVINEEHKIWKKNTPFLYDLVMTHALEWPSLTAQWLPDVTRPEGKDFSIHRLVLGTHTSDEQNHLVIASVQLPNDDAQFDASHYDSEKGEFGGFGSVSGKIEIEIKINHEGEVNRARYMPQNPCIIATKTPSSDVLVFDYTKHPSKPDPSGECNPDLRLRGHQKEGYGLSWNPNLSGHLLSASDDHTICLWDISAVPKEGKVVDAKTIFTGHTAVVEDVSWHLLHESLFGSVADDQKLMIWDTRSNNTSKPSHSVDAHTAEVNCLSFNPYSEFILATGSADKTVALWDLRNLKLKLHSFESHKDEIFQVQWSPHNETILASSGTDRRLNVWDLSKIGEEQSPEDAEDGPPELLFIHGGHTAKISDFSWNPNEPWVICSVSEDNIMQVWQMAENIYNDEDPEGSVDPEGQGS</sequence>
<organism>
    <name type="scientific">Pongo abelii</name>
    <name type="common">Sumatran orangutan</name>
    <name type="synonym">Pongo pygmaeus abelii</name>
    <dbReference type="NCBI Taxonomy" id="9601"/>
    <lineage>
        <taxon>Eukaryota</taxon>
        <taxon>Metazoa</taxon>
        <taxon>Chordata</taxon>
        <taxon>Craniata</taxon>
        <taxon>Vertebrata</taxon>
        <taxon>Euteleostomi</taxon>
        <taxon>Mammalia</taxon>
        <taxon>Eutheria</taxon>
        <taxon>Euarchontoglires</taxon>
        <taxon>Primates</taxon>
        <taxon>Haplorrhini</taxon>
        <taxon>Catarrhini</taxon>
        <taxon>Hominidae</taxon>
        <taxon>Pongo</taxon>
    </lineage>
</organism>
<gene>
    <name type="primary">RBBP4</name>
</gene>
<comment type="function">
    <text evidence="1">Core histone-binding subunit that may target chromatin assembly factors, chromatin remodeling factors and histone deacetylases to their histone substrates in a manner that is regulated by nucleosomal DNA (By similarity). Component of the chromatin assembly factor 1 (CAF-1) complex, which is required for chromatin assembly following DNA replication and DNA repair (By similarity). Component of the core histone deacetylase (HDAC) complex, which promotes histone deacetylation and consequent transcriptional repression (By similarity). Component of the nucleosome remodeling and histone deacetylase complex (the NuRD complex), which promotes transcriptional repression by histone deacetylation and nucleosome remodeling (By similarity). Component of the PRC2 complex, which promotes repression of homeotic genes during development (By similarity). Component of the NURF (nucleosome remodeling factor) complex (By similarity).</text>
</comment>
<comment type="subunit">
    <text evidence="1 2">Binds directly to helix 1 of the histone fold of histone H4, a region that is not accessible when H4 is in chromatin (By similarity). Subunit of the chromatin assembly factor 1 (CAF-1) complex, which is composed of RBBP4, CHAF1B and CHAF1A (By similarity). Subunit of the core histone deacetylase (HDAC) complex, which is composed of HDAC1, HDAC2, RBBP4 and RBBP7 (By similarity). The core HDAC complex associates with SIN3A, ARID4B/SAP180, SAP18, SAP30, SAP130, SUDS3/SAP45 and possibly ARID4A/RBP1 and ING1 to form the SIN3 HDAC complex (By similarity). Component of the nucleosome remodeling and deacetylase (NuRD) repressor complex, composed of core proteins MTA1, MTA2, MTA3, RBBP4, RBBP7, HDAC1, HDAC2, MBD2, MBD3, and peripherally associated proteins CDK2AP1, CDK2AP2, GATAD2A, GATAD2B, CHD3, CHD4 and CHD5 (By similarity). The exact stoichiometry of the NuRD complex is unknown, and some subunits such as MBD2 and MBD3, GATAD2A and GATAD2B, and CHD3, CHD4 and CHD5 define mutually exclusive NuRD complexes (By similarity). Interacts with ZNF512B; the interaction is direct and may play a role in repressing gene expression (By similarity). The NuRD complex may also interact with MBD3L1 and MBD3L2 (By similarity). Component of the PRC2 complex, which consists of the core subunits EED, EZH1 or EZH2, SUZ12, and RBBP4, and various combinations of accessory subunits including AEBP2, JARID2, PHF19, MTF2 and EPOP (By similarity). Forms a monomeric PRC2.2 (class 2) complex consisting of at least SUZ12, RBBP4, AEBP2 and JARID2 (By similarity). Forms a dimeric PRC2.1 (class 1, PRC-PCL) complex consisting of at least SUZ12, RBBP4, and PHF19; PHF19 stabilizes the dimeric structure which enhances PRC2 interaction with chromatin (By similarity). Component of the NURF-1 ISWI chromatin remodeling complex (also called the nucleosome-remodeling factor (NURF) complex) at least composed of SMARCA1 (isoform 2), BPTF, RBBP4 and RBBP7 (By similarity). Within the complex interacts with isoform 2 of SMARCA1 (By similarity). Component of the BPFT-SMARCA1 complex at least composed of SMARCA1 (isoform 1), BPFT, RBBP4 and RBBP7; the complex is catalytically inactive and does not remodel chromatin (By similarity). Within the complex interacts with isoform 1 of SMARCA1 (By similarity). Interacts with the ISWI chromatin remodeling complex component SMARCA5; the interaction is direct (By similarity). Interacts with the viral protein-binding domain of the retinoblastoma protein (RB1) (By similarity). Component of the DREAM complex (also named LINC complex) at least composed of E2F4, E2F5, LIN9, LIN37, LIN52, LIN54, MYBL1, MYBL2, RBL1, RBL2, RBBP4, TFDP1 and TFDP2 (By similarity). The complex exists in quiescent cells where it represses cell cycle-dependent genes (By similarity). It dissociates in S phase when LIN9, LIN37, LIN52 and LIN54 form a subcomplex that binds to MYBL2 (By similarity). Found in a complex composed of at least SINHCAF, SIN3A, HDAC1, SAP30, RBBP4, OGT and TET1 (By similarity). Interacts with ZNF827; the interaction is direct and recruits RBBP4 to telomeres (By similarity). Interacts with MTA1; the interaction is direct and mutually exclusive with binding histone H4 (By similarity). Interacts with ARMC12 (via ARM domains) (By similarity). Interacts with BRCA1 (By similarity). Interacts with CDK2AP1 (By similarity). Interacts with CREBBP, and this interaction may be enhanced by the binding of phosphorylated CREB1 to CREBBP (By similarity). Interacts with ERCC6 (By similarity). Interacts with HDAC7 (By similarity). Interacts with PHF6 (By similarity). Interacts with PWWP2B (By similarity). Interacts with SPEN/MINT (By similarity). Interacts with SUV39H1 (By similarity).</text>
</comment>
<comment type="subcellular location">
    <subcellularLocation>
        <location evidence="1">Nucleus</location>
    </subcellularLocation>
    <subcellularLocation>
        <location evidence="1">Chromosome</location>
        <location evidence="1">Telomere</location>
    </subcellularLocation>
    <text evidence="1">Localizes to chromatin as part of the PRC2 complex.</text>
</comment>
<comment type="similarity">
    <text evidence="3">Belongs to the WD repeat RBAP46/RBAP48/MSI1 family.</text>
</comment>
<comment type="sequence caution" evidence="3">
    <conflict type="frameshift">
        <sequence resource="EMBL-CDS" id="CAH89565"/>
    </conflict>
</comment>
<name>RBBP4_PONAB</name>
<evidence type="ECO:0000250" key="1">
    <source>
        <dbReference type="UniProtKB" id="Q09028"/>
    </source>
</evidence>
<evidence type="ECO:0000250" key="2">
    <source>
        <dbReference type="UniProtKB" id="Q60972"/>
    </source>
</evidence>
<evidence type="ECO:0000305" key="3"/>
<feature type="initiator methionine" description="Removed" evidence="1">
    <location>
        <position position="1"/>
    </location>
</feature>
<feature type="chain" id="PRO_0000051188" description="Histone-binding protein RBBP4">
    <location>
        <begin position="2"/>
        <end position="425"/>
    </location>
</feature>
<feature type="repeat" description="WD 1" evidence="1">
    <location>
        <begin position="32"/>
        <end position="125"/>
    </location>
</feature>
<feature type="repeat" description="WD 2" evidence="1">
    <location>
        <begin position="126"/>
        <end position="175"/>
    </location>
</feature>
<feature type="repeat" description="WD 3" evidence="1">
    <location>
        <begin position="176"/>
        <end position="223"/>
    </location>
</feature>
<feature type="repeat" description="WD 4" evidence="1">
    <location>
        <begin position="225"/>
        <end position="270"/>
    </location>
</feature>
<feature type="repeat" description="WD 5" evidence="1">
    <location>
        <begin position="271"/>
        <end position="314"/>
    </location>
</feature>
<feature type="repeat" description="WD 6" evidence="1">
    <location>
        <begin position="315"/>
        <end position="371"/>
    </location>
</feature>
<feature type="repeat" description="WD 7" evidence="1">
    <location>
        <begin position="372"/>
        <end position="404"/>
    </location>
</feature>
<feature type="modified residue" description="N-acetylalanine" evidence="1">
    <location>
        <position position="2"/>
    </location>
</feature>
<feature type="modified residue" description="N6-acetyllysine; alternate" evidence="1">
    <location>
        <position position="4"/>
    </location>
</feature>
<feature type="modified residue" description="Phosphoserine" evidence="1">
    <location>
        <position position="110"/>
    </location>
</feature>
<feature type="modified residue" description="N6-acetyllysine; alternate" evidence="2">
    <location>
        <position position="160"/>
    </location>
</feature>
<feature type="modified residue" description="Phosphoserine" evidence="1">
    <location>
        <position position="355"/>
    </location>
</feature>
<feature type="cross-link" description="Glycyl lysine isopeptide (Lys-Gly) (interchain with G-Cter in SUMO2); alternate" evidence="1">
    <location>
        <position position="4"/>
    </location>
</feature>
<feature type="cross-link" description="Glycyl lysine isopeptide (Lys-Gly) (interchain with G-Cter in ubiquitin); alternate" evidence="1">
    <location>
        <position position="4"/>
    </location>
</feature>
<feature type="cross-link" description="Glycyl lysine isopeptide (Lys-Gly) (interchain with G-Cter in SUMO2); alternate" evidence="1">
    <location>
        <position position="160"/>
    </location>
</feature>
<proteinExistence type="evidence at transcript level"/>